<feature type="chain" id="PRO_0000270796" description="TSL-kinase interacting protein 1">
    <location>
        <begin position="1"/>
        <end position="743"/>
    </location>
</feature>
<feature type="domain" description="SANT" evidence="1">
    <location>
        <begin position="53"/>
        <end position="104"/>
    </location>
</feature>
<feature type="region of interest" description="Disordered" evidence="2">
    <location>
        <begin position="486"/>
        <end position="523"/>
    </location>
</feature>
<feature type="region of interest" description="Disordered" evidence="2">
    <location>
        <begin position="626"/>
        <end position="679"/>
    </location>
</feature>
<feature type="compositionally biased region" description="Basic and acidic residues" evidence="2">
    <location>
        <begin position="488"/>
        <end position="499"/>
    </location>
</feature>
<feature type="splice variant" id="VSP_022229" description="In isoform 2." evidence="5">
    <location>
        <begin position="286"/>
        <end position="287"/>
    </location>
</feature>
<feature type="sequence conflict" description="In Ref. 1; AAM94622." evidence="6" ref="1">
    <original>L</original>
    <variation>V</variation>
    <location>
        <position position="2"/>
    </location>
</feature>
<gene>
    <name type="primary">TKI1</name>
    <name type="ordered locus">At2g36960</name>
    <name type="ORF">T1J8.14</name>
</gene>
<reference key="1">
    <citation type="journal article" date="2004" name="Plant Physiol.">
        <title>TOUSLED kinase activity oscillates during the cell cycle and interacts with chromatin regulators.</title>
        <authorList>
            <person name="Ehsan H."/>
            <person name="Reichheld J.-P."/>
            <person name="Durfee T."/>
            <person name="Roe J.L."/>
        </authorList>
    </citation>
    <scope>NUCLEOTIDE SEQUENCE [MRNA] (ISOFORM 2)</scope>
    <scope>INTERACTION WITH TOUSLED</scope>
    <scope>PHOSPHORYLATION</scope>
    <scope>TISSUE SPECIFICITY</scope>
    <source>
        <strain>cv. Columbia</strain>
    </source>
</reference>
<reference key="2">
    <citation type="journal article" date="1999" name="Nature">
        <title>Sequence and analysis of chromosome 2 of the plant Arabidopsis thaliana.</title>
        <authorList>
            <person name="Lin X."/>
            <person name="Kaul S."/>
            <person name="Rounsley S.D."/>
            <person name="Shea T.P."/>
            <person name="Benito M.-I."/>
            <person name="Town C.D."/>
            <person name="Fujii C.Y."/>
            <person name="Mason T.M."/>
            <person name="Bowman C.L."/>
            <person name="Barnstead M.E."/>
            <person name="Feldblyum T.V."/>
            <person name="Buell C.R."/>
            <person name="Ketchum K.A."/>
            <person name="Lee J.J."/>
            <person name="Ronning C.M."/>
            <person name="Koo H.L."/>
            <person name="Moffat K.S."/>
            <person name="Cronin L.A."/>
            <person name="Shen M."/>
            <person name="Pai G."/>
            <person name="Van Aken S."/>
            <person name="Umayam L."/>
            <person name="Tallon L.J."/>
            <person name="Gill J.E."/>
            <person name="Adams M.D."/>
            <person name="Carrera A.J."/>
            <person name="Creasy T.H."/>
            <person name="Goodman H.M."/>
            <person name="Somerville C.R."/>
            <person name="Copenhaver G.P."/>
            <person name="Preuss D."/>
            <person name="Nierman W.C."/>
            <person name="White O."/>
            <person name="Eisen J.A."/>
            <person name="Salzberg S.L."/>
            <person name="Fraser C.M."/>
            <person name="Venter J.C."/>
        </authorList>
    </citation>
    <scope>NUCLEOTIDE SEQUENCE [LARGE SCALE GENOMIC DNA] (ISOFORM 1)</scope>
    <source>
        <strain>cv. Columbia</strain>
    </source>
</reference>
<reference key="3">
    <citation type="journal article" date="2017" name="Plant J.">
        <title>Araport11: a complete reannotation of the Arabidopsis thaliana reference genome.</title>
        <authorList>
            <person name="Cheng C.Y."/>
            <person name="Krishnakumar V."/>
            <person name="Chan A.P."/>
            <person name="Thibaud-Nissen F."/>
            <person name="Schobel S."/>
            <person name="Town C.D."/>
        </authorList>
    </citation>
    <scope>GENOME REANNOTATION</scope>
    <source>
        <strain>cv. Columbia</strain>
    </source>
</reference>
<reference key="4">
    <citation type="journal article" date="2003" name="Science">
        <title>Empirical analysis of transcriptional activity in the Arabidopsis genome.</title>
        <authorList>
            <person name="Yamada K."/>
            <person name="Lim J."/>
            <person name="Dale J.M."/>
            <person name="Chen H."/>
            <person name="Shinn P."/>
            <person name="Palm C.J."/>
            <person name="Southwick A.M."/>
            <person name="Wu H.C."/>
            <person name="Kim C.J."/>
            <person name="Nguyen M."/>
            <person name="Pham P.K."/>
            <person name="Cheuk R.F."/>
            <person name="Karlin-Newmann G."/>
            <person name="Liu S.X."/>
            <person name="Lam B."/>
            <person name="Sakano H."/>
            <person name="Wu T."/>
            <person name="Yu G."/>
            <person name="Miranda M."/>
            <person name="Quach H.L."/>
            <person name="Tripp M."/>
            <person name="Chang C.H."/>
            <person name="Lee J.M."/>
            <person name="Toriumi M.J."/>
            <person name="Chan M.M."/>
            <person name="Tang C.C."/>
            <person name="Onodera C.S."/>
            <person name="Deng J.M."/>
            <person name="Akiyama K."/>
            <person name="Ansari Y."/>
            <person name="Arakawa T."/>
            <person name="Banh J."/>
            <person name="Banno F."/>
            <person name="Bowser L."/>
            <person name="Brooks S.Y."/>
            <person name="Carninci P."/>
            <person name="Chao Q."/>
            <person name="Choy N."/>
            <person name="Enju A."/>
            <person name="Goldsmith A.D."/>
            <person name="Gurjal M."/>
            <person name="Hansen N.F."/>
            <person name="Hayashizaki Y."/>
            <person name="Johnson-Hopson C."/>
            <person name="Hsuan V.W."/>
            <person name="Iida K."/>
            <person name="Karnes M."/>
            <person name="Khan S."/>
            <person name="Koesema E."/>
            <person name="Ishida J."/>
            <person name="Jiang P.X."/>
            <person name="Jones T."/>
            <person name="Kawai J."/>
            <person name="Kamiya A."/>
            <person name="Meyers C."/>
            <person name="Nakajima M."/>
            <person name="Narusaka M."/>
            <person name="Seki M."/>
            <person name="Sakurai T."/>
            <person name="Satou M."/>
            <person name="Tamse R."/>
            <person name="Vaysberg M."/>
            <person name="Wallender E.K."/>
            <person name="Wong C."/>
            <person name="Yamamura Y."/>
            <person name="Yuan S."/>
            <person name="Shinozaki K."/>
            <person name="Davis R.W."/>
            <person name="Theologis A."/>
            <person name="Ecker J.R."/>
        </authorList>
    </citation>
    <scope>NUCLEOTIDE SEQUENCE [LARGE SCALE MRNA]</scope>
    <source>
        <strain>cv. Columbia</strain>
    </source>
</reference>
<reference key="5">
    <citation type="journal article" date="2010" name="J. Mol. Biol.">
        <title>PAH-domain-specific interactions of the Arabidopsis transcription coregulator SIN3-LIKE1 (SNL1) with telomere-binding protein 1 and ALWAYS EARLY2 Myb-DNA binding factors.</title>
        <authorList>
            <person name="Bowen A.J."/>
            <person name="Gonzalez D."/>
            <person name="Mullins J.G."/>
            <person name="Bhatt A.M."/>
            <person name="Martinez A."/>
            <person name="Conlan R.S."/>
        </authorList>
    </citation>
    <scope>INTERACTION WITH SNL1</scope>
</reference>
<organism>
    <name type="scientific">Arabidopsis thaliana</name>
    <name type="common">Mouse-ear cress</name>
    <dbReference type="NCBI Taxonomy" id="3702"/>
    <lineage>
        <taxon>Eukaryota</taxon>
        <taxon>Viridiplantae</taxon>
        <taxon>Streptophyta</taxon>
        <taxon>Embryophyta</taxon>
        <taxon>Tracheophyta</taxon>
        <taxon>Spermatophyta</taxon>
        <taxon>Magnoliopsida</taxon>
        <taxon>eudicotyledons</taxon>
        <taxon>Gunneridae</taxon>
        <taxon>Pentapetalae</taxon>
        <taxon>rosids</taxon>
        <taxon>malvids</taxon>
        <taxon>Brassicales</taxon>
        <taxon>Brassicaceae</taxon>
        <taxon>Camelineae</taxon>
        <taxon>Arabidopsis</taxon>
    </lineage>
</organism>
<dbReference type="EMBL" id="AF530160">
    <property type="protein sequence ID" value="AAM94622.1"/>
    <property type="molecule type" value="mRNA"/>
</dbReference>
<dbReference type="EMBL" id="AC006922">
    <property type="protein sequence ID" value="AAD31581.1"/>
    <property type="status" value="ALT_SEQ"/>
    <property type="molecule type" value="Genomic_DNA"/>
</dbReference>
<dbReference type="EMBL" id="CP002685">
    <property type="protein sequence ID" value="AEC09326.1"/>
    <property type="molecule type" value="Genomic_DNA"/>
</dbReference>
<dbReference type="EMBL" id="CP002685">
    <property type="protein sequence ID" value="AEC09327.2"/>
    <property type="molecule type" value="Genomic_DNA"/>
</dbReference>
<dbReference type="EMBL" id="AY064068">
    <property type="protein sequence ID" value="AAL36424.1"/>
    <property type="molecule type" value="mRNA"/>
</dbReference>
<dbReference type="EMBL" id="AY096376">
    <property type="protein sequence ID" value="AAM20017.1"/>
    <property type="molecule type" value="mRNA"/>
</dbReference>
<dbReference type="PIR" id="G84786">
    <property type="entry name" value="G84786"/>
</dbReference>
<dbReference type="RefSeq" id="NP_001318368.1">
    <molecule id="Q8LJT8-1"/>
    <property type="nucleotide sequence ID" value="NM_001336615.1"/>
</dbReference>
<dbReference type="RefSeq" id="NP_850273.1">
    <molecule id="Q8LJT8-1"/>
    <property type="nucleotide sequence ID" value="NM_179942.4"/>
</dbReference>
<dbReference type="BioGRID" id="3614">
    <property type="interactions" value="6"/>
</dbReference>
<dbReference type="FunCoup" id="Q8LJT8">
    <property type="interactions" value="2075"/>
</dbReference>
<dbReference type="IntAct" id="Q8LJT8">
    <property type="interactions" value="7"/>
</dbReference>
<dbReference type="STRING" id="3702.Q8LJT8"/>
<dbReference type="SwissPalm" id="Q8LJT8"/>
<dbReference type="PaxDb" id="3702-AT2G36960.3"/>
<dbReference type="ProteomicsDB" id="246409">
    <molecule id="Q8LJT8-1"/>
</dbReference>
<dbReference type="EnsemblPlants" id="AT2G36960.1">
    <molecule id="Q8LJT8-1"/>
    <property type="protein sequence ID" value="AT2G36960.1"/>
    <property type="gene ID" value="AT2G36960"/>
</dbReference>
<dbReference type="EnsemblPlants" id="AT2G36960.2">
    <molecule id="Q8LJT8-1"/>
    <property type="protein sequence ID" value="AT2G36960.2"/>
    <property type="gene ID" value="AT2G36960"/>
</dbReference>
<dbReference type="GeneID" id="818270"/>
<dbReference type="Gramene" id="AT2G36960.1">
    <molecule id="Q8LJT8-1"/>
    <property type="protein sequence ID" value="AT2G36960.1"/>
    <property type="gene ID" value="AT2G36960"/>
</dbReference>
<dbReference type="Gramene" id="AT2G36960.2">
    <molecule id="Q8LJT8-1"/>
    <property type="protein sequence ID" value="AT2G36960.2"/>
    <property type="gene ID" value="AT2G36960"/>
</dbReference>
<dbReference type="KEGG" id="ath:AT2G36960"/>
<dbReference type="Araport" id="AT2G36960"/>
<dbReference type="TAIR" id="AT2G36960">
    <property type="gene designation" value="TKI1"/>
</dbReference>
<dbReference type="eggNOG" id="KOG4468">
    <property type="taxonomic scope" value="Eukaryota"/>
</dbReference>
<dbReference type="InParanoid" id="Q8LJT8"/>
<dbReference type="OMA" id="ADLYWAD"/>
<dbReference type="PhylomeDB" id="Q8LJT8"/>
<dbReference type="PRO" id="PR:Q8LJT8"/>
<dbReference type="Proteomes" id="UP000006548">
    <property type="component" value="Chromosome 2"/>
</dbReference>
<dbReference type="ExpressionAtlas" id="Q8LJT8">
    <property type="expression patterns" value="baseline and differential"/>
</dbReference>
<dbReference type="GO" id="GO:0005634">
    <property type="term" value="C:nucleus"/>
    <property type="evidence" value="ECO:0007669"/>
    <property type="project" value="UniProtKB-SubCell"/>
</dbReference>
<dbReference type="GO" id="GO:0003682">
    <property type="term" value="F:chromatin binding"/>
    <property type="evidence" value="ECO:0007669"/>
    <property type="project" value="InterPro"/>
</dbReference>
<dbReference type="GO" id="GO:0003677">
    <property type="term" value="F:DNA binding"/>
    <property type="evidence" value="ECO:0007669"/>
    <property type="project" value="UniProtKB-KW"/>
</dbReference>
<dbReference type="CDD" id="cd00167">
    <property type="entry name" value="SANT"/>
    <property type="match status" value="1"/>
</dbReference>
<dbReference type="FunFam" id="1.10.10.60:FF:000287">
    <property type="entry name" value="TSL-kinase interacting protein 1"/>
    <property type="match status" value="1"/>
</dbReference>
<dbReference type="FunFam" id="1.20.58.1880:FF:000008">
    <property type="entry name" value="TSL-kinase interacting protein 1"/>
    <property type="match status" value="1"/>
</dbReference>
<dbReference type="Gene3D" id="1.20.58.1880">
    <property type="match status" value="1"/>
</dbReference>
<dbReference type="InterPro" id="IPR055315">
    <property type="entry name" value="Cramped-like"/>
</dbReference>
<dbReference type="InterPro" id="IPR009057">
    <property type="entry name" value="Homeodomain-like_sf"/>
</dbReference>
<dbReference type="InterPro" id="IPR001005">
    <property type="entry name" value="SANT/Myb"/>
</dbReference>
<dbReference type="InterPro" id="IPR017884">
    <property type="entry name" value="SANT_dom"/>
</dbReference>
<dbReference type="PANTHER" id="PTHR21677">
    <property type="entry name" value="CRAMPED PROTEIN"/>
    <property type="match status" value="1"/>
</dbReference>
<dbReference type="PANTHER" id="PTHR21677:SF1">
    <property type="entry name" value="PROTEIN CRAMPED-LIKE"/>
    <property type="match status" value="1"/>
</dbReference>
<dbReference type="Pfam" id="PF00249">
    <property type="entry name" value="Myb_DNA-binding"/>
    <property type="match status" value="1"/>
</dbReference>
<dbReference type="SMART" id="SM00717">
    <property type="entry name" value="SANT"/>
    <property type="match status" value="1"/>
</dbReference>
<dbReference type="SUPFAM" id="SSF46689">
    <property type="entry name" value="Homeodomain-like"/>
    <property type="match status" value="1"/>
</dbReference>
<dbReference type="PROSITE" id="PS51293">
    <property type="entry name" value="SANT"/>
    <property type="match status" value="1"/>
</dbReference>
<proteinExistence type="evidence at protein level"/>
<evidence type="ECO:0000255" key="1">
    <source>
        <dbReference type="PROSITE-ProRule" id="PRU00624"/>
    </source>
</evidence>
<evidence type="ECO:0000256" key="2">
    <source>
        <dbReference type="SAM" id="MobiDB-lite"/>
    </source>
</evidence>
<evidence type="ECO:0000269" key="3">
    <source>
    </source>
</evidence>
<evidence type="ECO:0000269" key="4">
    <source>
    </source>
</evidence>
<evidence type="ECO:0000303" key="5">
    <source>
    </source>
</evidence>
<evidence type="ECO:0000305" key="6"/>
<sequence length="743" mass="82258">MLKQFTHYCEMQAELIPEGPNGEGRLSNQNSNPNLLSSASISITQFPAKKPTRQWAAWTHQEEESFFTALRQVGKNFEKITSRVQSKNKDQVRHYYYRLVRRMNKLLGPDLSLDAKNPKDTNAAMLRWWSLLEKYSCKASKLHLKPRRFKLFIEALEHQLLKDRRKSIRKRTCQGENLSSASLGNISSHSRERGLDNRPFKLILSDGQNVKKLGPGRASTKHGESLSVNLGDEKEDTAFGRGGRQRRKQGYRKWEKAAIDGVSLVADAAEHLERTSIDKDMDDQTDLGPTRYLTGKSPLSLCSAGDVPLSDANMQFSAKLKLQLFPIDECTRRSLEMDKHNPHLELTLSNRKKISSVLEHLNRKWGSSSCATGELLLFPYNARKETVTCHQRWTHDSFLSAAEVHSMVGSPSVFRLRYGWFVHDASGSIISQVPTSDPCPSLEDDMNVDRLNEVNMLLTESGPLSVHSTAEQTTSVEPSQGLVCASGVHDRPARSRDDYEPASTSITPLEHLSGGNAQSPGEWADSLTNISIGDLLSEVPDDIDSDGVDPPATEGSHYLLRDVPFTSDSFDAAIAAHILRHQNKPSAQLPLTSGSSSLWDDEETRDAFSFQKNRFANSTELASVASPKGVGRVNGEPSQLVEASSGDEGSYNPHDDGDPMEEGPADPHTMDSPGKTPCGLADVYWPDSLGPLDLDIRSSKYTDDLILSESLGGLSRLIATSLDAFQNCSLFGFDNKKDKSNMV</sequence>
<protein>
    <recommendedName>
        <fullName>TSL-kinase interacting protein 1</fullName>
    </recommendedName>
    <alternativeName>
        <fullName>Myb-related protein TKI1</fullName>
    </alternativeName>
</protein>
<keyword id="KW-0025">Alternative splicing</keyword>
<keyword id="KW-0238">DNA-binding</keyword>
<keyword id="KW-0539">Nucleus</keyword>
<keyword id="KW-0597">Phosphoprotein</keyword>
<keyword id="KW-1185">Reference proteome</keyword>
<keyword id="KW-0804">Transcription</keyword>
<keyword id="KW-0805">Transcription regulation</keyword>
<accession>Q8LJT8</accession>
<accession>Q3EBL6</accession>
<accession>Q8VZJ8</accession>
<accession>Q9SJL1</accession>
<comment type="subunit">
    <text evidence="3 4">Interacts only with active kinase forms of TOUSLED. Interacts with SNL1.</text>
</comment>
<comment type="interaction">
    <interactant intactId="EBI-2366507">
        <id>Q8LJT8</id>
    </interactant>
    <interactant intactId="EBI-2325484">
        <id>Q39238</id>
        <label>TOUSLED</label>
    </interactant>
    <organismsDiffer>false</organismsDiffer>
    <experiments>4</experiments>
</comment>
<comment type="subcellular location">
    <subcellularLocation>
        <location>Nucleus</location>
    </subcellularLocation>
</comment>
<comment type="alternative products">
    <event type="alternative splicing"/>
    <isoform>
        <id>Q8LJT8-1</id>
        <name>1</name>
        <sequence type="displayed"/>
    </isoform>
    <isoform>
        <id>Q8LJT8-2</id>
        <name>2</name>
        <sequence type="described" ref="VSP_022229"/>
    </isoform>
</comment>
<comment type="tissue specificity">
    <text evidence="3">Expressed in flowers, roots and leaves.</text>
</comment>
<comment type="domain">
    <text>The Myb domain is not required for TOUSLED binding.</text>
</comment>
<comment type="PTM">
    <text evidence="3">Phosphorylated in vitro by TOUSLED.</text>
</comment>
<comment type="miscellaneous">
    <molecule>Isoform 2</molecule>
    <text evidence="6">May be due to a competing acceptor splice site.</text>
</comment>
<comment type="sequence caution" evidence="6">
    <conflict type="erroneous gene model prediction">
        <sequence resource="EMBL-CDS" id="AAD31581"/>
    </conflict>
</comment>
<name>TKI1_ARATH</name>